<keyword id="KW-0004">4Fe-4S</keyword>
<keyword id="KW-0274">FAD</keyword>
<keyword id="KW-0285">Flavoprotein</keyword>
<keyword id="KW-0288">FMN</keyword>
<keyword id="KW-0408">Iron</keyword>
<keyword id="KW-0411">Iron-sulfur</keyword>
<keyword id="KW-0479">Metal-binding</keyword>
<keyword id="KW-0520">NAD</keyword>
<keyword id="KW-0560">Oxidoreductase</keyword>
<reference key="1">
    <citation type="journal article" date="2014" name="Genome Announc.">
        <title>Whole-Genome Sequence of Burkholderia sp. Strain RPE67, a Bacterial Gut Symbiont of the Bean Bug Riptortus pedestris.</title>
        <authorList>
            <person name="Takeshita K."/>
            <person name="Shibata T.F."/>
            <person name="Nikoh N."/>
            <person name="Nishiyama T."/>
            <person name="Hasebe M."/>
            <person name="Fukatsu T."/>
            <person name="Shigenobu S."/>
            <person name="Kikuchi Y."/>
        </authorList>
    </citation>
    <scope>NUCLEOTIDE SEQUENCE [LARGE SCALE GENOMIC DNA]</scope>
    <source>
        <strain>RPE67</strain>
    </source>
</reference>
<reference key="2">
    <citation type="journal article" date="2025" name="RSC Chem. Biol.">
        <title>Bioinformatic and biochemical analysis uncovers novel activity in the 2-ER subfamily of OYEs.</title>
        <authorList>
            <person name="Blue-Lahom T.C."/>
            <person name="Jones S.K."/>
            <person name="Davis K.M."/>
        </authorList>
    </citation>
    <scope>FUNCTION</scope>
    <scope>CATALYTIC ACTIVITY</scope>
    <scope>PROBABLE ACTIVE SITE</scope>
    <scope>COFACTORS</scope>
    <scope>BIOPHYSICOCHEMICAL PROPERTIES</scope>
    <source>
        <strain>RPE67</strain>
    </source>
</reference>
<accession>P0DXY1</accession>
<sequence length="674" mass="74080">MTTASSDPLLQPFTLKHLVLKNRVMSTSHASRLTRDEFPQEVYQRYHEEKAKGGLALTMFGGSSNVSLDSPNTFQQINLSADAVVPHLRRFSDRIHTHGAALMCQITHLGRRGDAYTEPWLPMIAPSPVRETLHRAMPQAIHDADIKRVIRDFGLAAKRCRDGGLDGIETHAGGHLIGQFMDPTVNLRTDKYGGSTANRVRFAIEVHEEIRKQVGDDFVVGFRFALEDGCSFEEGLEMSRILQGTGLFDFFNVTFGRMDTKMALAVNSMPGMFVPSAPWLPKAAAFKRAVDLPVFHAAKIADLATARYAIREGLLDMVGMTRAHIAEPHLVKLVEAGKEDEARPCVGASFCRNFRATCIHNPATSRETYLTHDIPKAAQTKRVLIVGAGPAGLEAARICATRGHDVTVLEANSTAGGQLLLAATGSWRRDLIGIVDWRVSALERLSVDVRYNHYAELSDVLDHGADVVIIATGGLPNLDALPGAEHCKSVFDALTETPPREGSVIVYDGTGRHNAYLCAERYVDAGLDVSLALIDSMPAQETGGRGDDQVWMRNIARWDVPVRTNIELIEVTASSNGKRRAVFQHHLTNERVELEADHVVVERGMLAVEDLFEAARMYSANDGYTDLEAFATGKPQPGHEAEEGQFHLYRIGDASASRDIHTAIYDAYRLCLAL</sequence>
<name>OYE_CABCO</name>
<proteinExistence type="evidence at protein level"/>
<feature type="chain" id="PRO_0000462325" description="Multifunctional alkene reductase/demethylase OYE">
    <location>
        <begin position="1"/>
        <end position="674"/>
    </location>
</feature>
<feature type="active site" description="Proton donor" evidence="5">
    <location>
        <position position="175"/>
    </location>
</feature>
<feature type="binding site" evidence="1">
    <location>
        <position position="62"/>
    </location>
    <ligand>
        <name>FMN</name>
        <dbReference type="ChEBI" id="CHEBI:58210"/>
    </ligand>
</feature>
<feature type="binding site" evidence="1">
    <location>
        <position position="105"/>
    </location>
    <ligand>
        <name>FMN</name>
        <dbReference type="ChEBI" id="CHEBI:58210"/>
    </ligand>
</feature>
<feature type="binding site" evidence="1">
    <location>
        <position position="223"/>
    </location>
    <ligand>
        <name>FMN</name>
        <dbReference type="ChEBI" id="CHEBI:58210"/>
    </ligand>
</feature>
<feature type="binding site" evidence="1">
    <location>
        <position position="299"/>
    </location>
    <ligand>
        <name>FMN</name>
        <dbReference type="ChEBI" id="CHEBI:58210"/>
    </ligand>
</feature>
<feature type="binding site" evidence="5">
    <location>
        <position position="345"/>
    </location>
    <ligand>
        <name>[4Fe-4S] cluster</name>
        <dbReference type="ChEBI" id="CHEBI:49883"/>
    </ligand>
</feature>
<feature type="binding site" evidence="5">
    <location>
        <position position="351"/>
    </location>
    <ligand>
        <name>[4Fe-4S] cluster</name>
        <dbReference type="ChEBI" id="CHEBI:49883"/>
    </ligand>
</feature>
<feature type="binding site" evidence="5">
    <location>
        <position position="358"/>
    </location>
    <ligand>
        <name>[4Fe-4S] cluster</name>
        <dbReference type="ChEBI" id="CHEBI:49883"/>
    </ligand>
</feature>
<feature type="binding site" evidence="1">
    <location>
        <position position="391"/>
    </location>
    <ligand>
        <name>FAD</name>
        <dbReference type="ChEBI" id="CHEBI:57692"/>
    </ligand>
</feature>
<feature type="binding site" evidence="1">
    <location>
        <position position="418"/>
    </location>
    <ligand>
        <name>FAD</name>
        <dbReference type="ChEBI" id="CHEBI:57692"/>
    </ligand>
</feature>
<feature type="binding site" evidence="1">
    <location>
        <position position="428"/>
    </location>
    <ligand>
        <name>FAD</name>
        <dbReference type="ChEBI" id="CHEBI:57692"/>
    </ligand>
</feature>
<organism>
    <name type="scientific">Caballeronia cordobensis</name>
    <name type="common">Burkholderia cordobensis</name>
    <dbReference type="NCBI Taxonomy" id="1353886"/>
    <lineage>
        <taxon>Bacteria</taxon>
        <taxon>Pseudomonadati</taxon>
        <taxon>Pseudomonadota</taxon>
        <taxon>Betaproteobacteria</taxon>
        <taxon>Burkholderiales</taxon>
        <taxon>Burkholderiaceae</taxon>
        <taxon>Caballeronia</taxon>
    </lineage>
</organism>
<evidence type="ECO:0000250" key="1">
    <source>
        <dbReference type="UniProtKB" id="P42593"/>
    </source>
</evidence>
<evidence type="ECO:0000269" key="2">
    <source>
    </source>
</evidence>
<evidence type="ECO:0000303" key="3">
    <source>
    </source>
</evidence>
<evidence type="ECO:0000305" key="4"/>
<evidence type="ECO:0000305" key="5">
    <source>
    </source>
</evidence>
<gene>
    <name type="ORF">BRPE67_CCDS01850</name>
</gene>
<protein>
    <recommendedName>
        <fullName evidence="4">Multifunctional alkene reductase/demethylase OYE</fullName>
        <ecNumber evidence="2">1.14.13.-</ecNumber>
        <ecNumber evidence="2">1.3.1.-</ecNumber>
    </recommendedName>
    <alternativeName>
        <fullName evidence="3">Old yellow enzyme</fullName>
        <shortName evidence="3">OYE</shortName>
    </alternativeName>
</protein>
<comment type="function">
    <text evidence="2 5">A member of the 2-enoate reductase subfamily of old yellow enzymes (OYE) able to reduce alpha/beta alkenes near electron-withdrawing groups as well as perform oxidative demethylation chemistry (PubMed:39867842). Prefers NADH over NADPH as cosubstrate (PubMed:39867842). May play a role in osmotic stress response in situ (Probable) (PubMed:39867842).</text>
</comment>
<comment type="catalytic activity">
    <reaction evidence="2">
        <text>3-phenylpropanoate + NAD(+) = (E)-cinnamate + NADH + H(+)</text>
        <dbReference type="Rhea" id="RHEA:50944"/>
        <dbReference type="ChEBI" id="CHEBI:15378"/>
        <dbReference type="ChEBI" id="CHEBI:15669"/>
        <dbReference type="ChEBI" id="CHEBI:51057"/>
        <dbReference type="ChEBI" id="CHEBI:57540"/>
        <dbReference type="ChEBI" id="CHEBI:57945"/>
    </reaction>
    <physiologicalReaction direction="right-to-left" evidence="5">
        <dbReference type="Rhea" id="RHEA:50946"/>
    </physiologicalReaction>
</comment>
<comment type="catalytic activity">
    <reaction evidence="2">
        <text>N-methyl-L-proline + NAD(+) + H2O = L-proline + formaldehyde + NADH + H(+)</text>
        <dbReference type="Rhea" id="RHEA:83899"/>
        <dbReference type="ChEBI" id="CHEBI:15377"/>
        <dbReference type="ChEBI" id="CHEBI:15378"/>
        <dbReference type="ChEBI" id="CHEBI:16842"/>
        <dbReference type="ChEBI" id="CHEBI:57540"/>
        <dbReference type="ChEBI" id="CHEBI:57945"/>
        <dbReference type="ChEBI" id="CHEBI:60039"/>
        <dbReference type="ChEBI" id="CHEBI:133743"/>
    </reaction>
</comment>
<comment type="cofactor">
    <cofactor evidence="2">
        <name>[4Fe-4S] cluster</name>
        <dbReference type="ChEBI" id="CHEBI:49883"/>
    </cofactor>
    <text evidence="2">Binds 1 [4Fe-4S] cluster per monomer via a modified motif.</text>
</comment>
<comment type="cofactor">
    <cofactor evidence="5">
        <name>FAD</name>
        <dbReference type="ChEBI" id="CHEBI:57692"/>
    </cofactor>
</comment>
<comment type="cofactor">
    <cofactor evidence="5">
        <name>FMN</name>
        <dbReference type="ChEBI" id="CHEBI:58210"/>
    </cofactor>
</comment>
<comment type="biophysicochemical properties">
    <kinetics>
        <KM evidence="2">92.84 uM for NADH with R-carvone as substrate</KM>
        <KM evidence="2">167.25 uM for NADPH with R-carvone as substrate</KM>
    </kinetics>
    <phDependence>
        <text evidence="2">Optimum pH is 8.0 with R-carvone and NADH as substrates.</text>
    </phDependence>
</comment>
<comment type="similarity">
    <text evidence="4">In the N-terminal section; belongs to the NADH:flavin oxidoreductase/NADH oxidase family.</text>
</comment>
<dbReference type="EC" id="1.14.13.-" evidence="2"/>
<dbReference type="EC" id="1.3.1.-" evidence="2"/>
<dbReference type="EMBL" id="AP014578">
    <property type="protein sequence ID" value="BAO89787.1"/>
    <property type="molecule type" value="Genomic_DNA"/>
</dbReference>